<sequence length="196" mass="21447">MLTIGVLGLQGAVREHIHAIEACGAAGLVVKRPEQLNEVDGLILPGGESTTMRRLIDTYQFMEPLREFAAQGKPMFGTCAGLIILAKEIAGSDNPHLGLLNVVVERNSFGRQVDSFEADLTIKGLDEPFTGVFIRAPHILEAGENVEVLSEHNGRIVAAKQGQFLGCSFHPELTEDHRVTQLFVEMVEEYKQKALV</sequence>
<feature type="chain" id="PRO_0000135632" description="Pyridoxal 5'-phosphate synthase subunit PdxT">
    <location>
        <begin position="1"/>
        <end position="196"/>
    </location>
</feature>
<feature type="active site" description="Nucleophile" evidence="1 5">
    <location>
        <position position="79"/>
    </location>
</feature>
<feature type="active site" description="Charge relay system" evidence="1 5">
    <location>
        <position position="170"/>
    </location>
</feature>
<feature type="active site" description="Charge relay system" evidence="1 5">
    <location>
        <position position="172"/>
    </location>
</feature>
<feature type="binding site" evidence="1 3">
    <location>
        <begin position="47"/>
        <end position="49"/>
    </location>
    <ligand>
        <name>L-glutamine</name>
        <dbReference type="ChEBI" id="CHEBI:58359"/>
    </ligand>
</feature>
<feature type="binding site" evidence="1 3">
    <location>
        <position position="106"/>
    </location>
    <ligand>
        <name>L-glutamine</name>
        <dbReference type="ChEBI" id="CHEBI:58359"/>
    </ligand>
</feature>
<feature type="binding site" evidence="1 3">
    <location>
        <begin position="134"/>
        <end position="135"/>
    </location>
    <ligand>
        <name>L-glutamine</name>
        <dbReference type="ChEBI" id="CHEBI:58359"/>
    </ligand>
</feature>
<feature type="mutagenesis site" description="3-fold reduction in glutaminase activity." evidence="4">
    <original>Q</original>
    <variation>A</variation>
    <location>
        <position position="10"/>
    </location>
</feature>
<feature type="mutagenesis site" description="Almost no activity." evidence="4">
    <original>Q</original>
    <variation>E</variation>
    <location>
        <position position="10"/>
    </location>
</feature>
<feature type="mutagenesis site" description="10-fold reduction in glutaminase activity." evidence="4">
    <original>Q</original>
    <variation>N</variation>
    <location>
        <position position="10"/>
    </location>
</feature>
<feature type="mutagenesis site" description="Almost no effect on glutaminase activity." evidence="4">
    <original>E</original>
    <variation>A</variation>
    <location>
        <position position="15"/>
    </location>
</feature>
<feature type="mutagenesis site" description="No activity, disturbing interaction with PdxS." evidence="4">
    <original>E</original>
    <variation>A</variation>
    <location>
        <position position="48"/>
    </location>
</feature>
<feature type="mutagenesis site" description="No activity, disturbing interaction with PdxS." evidence="4">
    <original>R</original>
    <variation>A</variation>
    <location>
        <position position="106"/>
    </location>
</feature>
<feature type="mutagenesis site" description="No activity, disturbing interaction with PdxS." evidence="4">
    <original>R</original>
    <variation>A</variation>
    <location>
        <position position="135"/>
    </location>
</feature>
<feature type="mutagenesis site" description="No activity." evidence="3">
    <original>H</original>
    <variation>N</variation>
    <location>
        <position position="170"/>
    </location>
</feature>
<feature type="strand" evidence="6">
    <location>
        <begin position="3"/>
        <end position="7"/>
    </location>
</feature>
<feature type="strand" evidence="6">
    <location>
        <begin position="9"/>
        <end position="11"/>
    </location>
</feature>
<feature type="helix" evidence="6">
    <location>
        <begin position="14"/>
        <end position="22"/>
    </location>
</feature>
<feature type="strand" evidence="6">
    <location>
        <begin position="26"/>
        <end position="30"/>
    </location>
</feature>
<feature type="helix" evidence="6">
    <location>
        <begin position="33"/>
        <end position="38"/>
    </location>
</feature>
<feature type="strand" evidence="6">
    <location>
        <begin position="40"/>
        <end position="44"/>
    </location>
</feature>
<feature type="helix" evidence="6">
    <location>
        <begin position="49"/>
        <end position="58"/>
    </location>
</feature>
<feature type="helix" evidence="6">
    <location>
        <begin position="62"/>
        <end position="70"/>
    </location>
</feature>
<feature type="strand" evidence="6">
    <location>
        <begin position="75"/>
        <end position="78"/>
    </location>
</feature>
<feature type="helix" evidence="6">
    <location>
        <begin position="80"/>
        <end position="85"/>
    </location>
</feature>
<feature type="strand" evidence="7">
    <location>
        <begin position="86"/>
        <end position="89"/>
    </location>
</feature>
<feature type="strand" evidence="6">
    <location>
        <begin position="102"/>
        <end position="105"/>
    </location>
</feature>
<feature type="turn" evidence="7">
    <location>
        <begin position="106"/>
        <end position="109"/>
    </location>
</feature>
<feature type="turn" evidence="6">
    <location>
        <begin position="111"/>
        <end position="113"/>
    </location>
</feature>
<feature type="strand" evidence="6">
    <location>
        <begin position="114"/>
        <end position="120"/>
    </location>
</feature>
<feature type="strand" evidence="6">
    <location>
        <begin position="129"/>
        <end position="135"/>
    </location>
</feature>
<feature type="strand" evidence="6">
    <location>
        <begin position="138"/>
        <end position="142"/>
    </location>
</feature>
<feature type="strand" evidence="6">
    <location>
        <begin position="147"/>
        <end position="152"/>
    </location>
</feature>
<feature type="strand" evidence="6">
    <location>
        <begin position="155"/>
        <end position="161"/>
    </location>
</feature>
<feature type="strand" evidence="6">
    <location>
        <begin position="164"/>
        <end position="169"/>
    </location>
</feature>
<feature type="strand" evidence="6">
    <location>
        <begin position="173"/>
        <end position="175"/>
    </location>
</feature>
<feature type="helix" evidence="6">
    <location>
        <begin position="178"/>
        <end position="193"/>
    </location>
</feature>
<keyword id="KW-0002">3D-structure</keyword>
<keyword id="KW-0903">Direct protein sequencing</keyword>
<keyword id="KW-0315">Glutamine amidotransferase</keyword>
<keyword id="KW-0378">Hydrolase</keyword>
<keyword id="KW-0456">Lyase</keyword>
<keyword id="KW-0663">Pyridoxal phosphate</keyword>
<keyword id="KW-1185">Reference proteome</keyword>
<proteinExistence type="evidence at protein level"/>
<comment type="function">
    <text evidence="1 2">Catalyzes the hydrolysis of glutamine to glutamate and ammonia as part of the biosynthesis of pyridoxal 5'-phosphate. The resulting ammonia molecule is channeled to the active site of PdxS.</text>
</comment>
<comment type="catalytic activity">
    <reaction evidence="1 2">
        <text>aldehydo-D-ribose 5-phosphate + D-glyceraldehyde 3-phosphate + L-glutamine = pyridoxal 5'-phosphate + L-glutamate + phosphate + 3 H2O + H(+)</text>
        <dbReference type="Rhea" id="RHEA:31507"/>
        <dbReference type="ChEBI" id="CHEBI:15377"/>
        <dbReference type="ChEBI" id="CHEBI:15378"/>
        <dbReference type="ChEBI" id="CHEBI:29985"/>
        <dbReference type="ChEBI" id="CHEBI:43474"/>
        <dbReference type="ChEBI" id="CHEBI:58273"/>
        <dbReference type="ChEBI" id="CHEBI:58359"/>
        <dbReference type="ChEBI" id="CHEBI:59776"/>
        <dbReference type="ChEBI" id="CHEBI:597326"/>
        <dbReference type="EC" id="4.3.3.6"/>
    </reaction>
</comment>
<comment type="catalytic activity">
    <reaction evidence="1 2">
        <text>L-glutamine + H2O = L-glutamate + NH4(+)</text>
        <dbReference type="Rhea" id="RHEA:15889"/>
        <dbReference type="ChEBI" id="CHEBI:15377"/>
        <dbReference type="ChEBI" id="CHEBI:28938"/>
        <dbReference type="ChEBI" id="CHEBI:29985"/>
        <dbReference type="ChEBI" id="CHEBI:58359"/>
        <dbReference type="EC" id="3.5.1.2"/>
    </reaction>
</comment>
<comment type="biophysicochemical properties">
    <kinetics>
        <KM evidence="2">0.99 mM for L-glutamine</KM>
        <text evidence="2">kcat is 7.60 min(-1) for glutaminase activity.</text>
    </kinetics>
</comment>
<comment type="pathway">
    <text evidence="1">Cofactor biosynthesis; pyridoxal 5'-phosphate biosynthesis.</text>
</comment>
<comment type="subunit">
    <text evidence="1 3">In the presence of PdxS, forms a dodecamer of heterodimers. Only shows activity in the heterodimer.</text>
</comment>
<comment type="interaction">
    <interactant intactId="EBI-7051766">
        <id>P37528</id>
    </interactant>
    <interactant intactId="EBI-7828661">
        <id>P37527</id>
        <label>pdxS</label>
    </interactant>
    <organismsDiffer>false</organismsDiffer>
    <experiments>5</experiments>
</comment>
<comment type="interaction">
    <interactant intactId="EBI-7051766">
        <id>P37528</id>
    </interactant>
    <interactant intactId="EBI-7051766">
        <id>P37528</id>
        <label>pdxT</label>
    </interactant>
    <organismsDiffer>false</organismsDiffer>
    <experiments>2</experiments>
</comment>
<comment type="similarity">
    <text evidence="1">Belongs to the glutaminase PdxT/SNO family.</text>
</comment>
<organism>
    <name type="scientific">Bacillus subtilis (strain 168)</name>
    <dbReference type="NCBI Taxonomy" id="224308"/>
    <lineage>
        <taxon>Bacteria</taxon>
        <taxon>Bacillati</taxon>
        <taxon>Bacillota</taxon>
        <taxon>Bacilli</taxon>
        <taxon>Bacillales</taxon>
        <taxon>Bacillaceae</taxon>
        <taxon>Bacillus</taxon>
    </lineage>
</organism>
<evidence type="ECO:0000255" key="1">
    <source>
        <dbReference type="HAMAP-Rule" id="MF_01615"/>
    </source>
</evidence>
<evidence type="ECO:0000269" key="2">
    <source>
    </source>
</evidence>
<evidence type="ECO:0000269" key="3">
    <source>
    </source>
</evidence>
<evidence type="ECO:0000269" key="4">
    <source>
    </source>
</evidence>
<evidence type="ECO:0000305" key="5"/>
<evidence type="ECO:0007829" key="6">
    <source>
        <dbReference type="PDB" id="2NV0"/>
    </source>
</evidence>
<evidence type="ECO:0007829" key="7">
    <source>
        <dbReference type="PDB" id="2NV2"/>
    </source>
</evidence>
<accession>P37528</accession>
<name>PDXT_BACSU</name>
<protein>
    <recommendedName>
        <fullName evidence="1">Pyridoxal 5'-phosphate synthase subunit PdxT</fullName>
        <ecNumber evidence="1 2">4.3.3.6</ecNumber>
    </recommendedName>
    <alternativeName>
        <fullName evidence="1">Pdx2</fullName>
    </alternativeName>
    <alternativeName>
        <fullName evidence="1">Pyridoxal 5'-phosphate synthase glutaminase subunit</fullName>
        <ecNumber evidence="1 2">3.5.1.2</ecNumber>
    </alternativeName>
</protein>
<dbReference type="EC" id="4.3.3.6" evidence="1 2"/>
<dbReference type="EC" id="3.5.1.2" evidence="1 2"/>
<dbReference type="EMBL" id="D26185">
    <property type="protein sequence ID" value="BAA05248.1"/>
    <property type="molecule type" value="Genomic_DNA"/>
</dbReference>
<dbReference type="EMBL" id="AL009126">
    <property type="protein sequence ID" value="CAB11788.1"/>
    <property type="molecule type" value="Genomic_DNA"/>
</dbReference>
<dbReference type="PIR" id="S66042">
    <property type="entry name" value="S66042"/>
</dbReference>
<dbReference type="RefSeq" id="NP_387893.1">
    <property type="nucleotide sequence ID" value="NC_000964.3"/>
</dbReference>
<dbReference type="RefSeq" id="WP_003226797.1">
    <property type="nucleotide sequence ID" value="NZ_OZ025638.1"/>
</dbReference>
<dbReference type="PDB" id="1R9G">
    <property type="method" value="X-ray"/>
    <property type="resolution" value="2.50 A"/>
    <property type="chains" value="A/B=1-196"/>
</dbReference>
<dbReference type="PDB" id="2NV0">
    <property type="method" value="X-ray"/>
    <property type="resolution" value="1.73 A"/>
    <property type="chains" value="A/B=1-196"/>
</dbReference>
<dbReference type="PDB" id="2NV2">
    <property type="method" value="X-ray"/>
    <property type="resolution" value="2.12 A"/>
    <property type="chains" value="B/D/F/H/J/L/N/P/R/T/V/X=1-196"/>
</dbReference>
<dbReference type="PDBsum" id="1R9G"/>
<dbReference type="PDBsum" id="2NV0"/>
<dbReference type="PDBsum" id="2NV2"/>
<dbReference type="SMR" id="P37528"/>
<dbReference type="DIP" id="DIP-57719N"/>
<dbReference type="FunCoup" id="P37528">
    <property type="interactions" value="348"/>
</dbReference>
<dbReference type="IntAct" id="P37528">
    <property type="interactions" value="2"/>
</dbReference>
<dbReference type="MINT" id="P37528"/>
<dbReference type="STRING" id="224308.BSU00120"/>
<dbReference type="PaxDb" id="224308-BSU00120"/>
<dbReference type="EnsemblBacteria" id="CAB11788">
    <property type="protein sequence ID" value="CAB11788"/>
    <property type="gene ID" value="BSU_00120"/>
</dbReference>
<dbReference type="GeneID" id="939971"/>
<dbReference type="KEGG" id="bsu:BSU00120"/>
<dbReference type="PATRIC" id="fig|224308.179.peg.12"/>
<dbReference type="eggNOG" id="COG0311">
    <property type="taxonomic scope" value="Bacteria"/>
</dbReference>
<dbReference type="InParanoid" id="P37528"/>
<dbReference type="OrthoDB" id="9810320at2"/>
<dbReference type="PhylomeDB" id="P37528"/>
<dbReference type="BioCyc" id="BSUB:BSU00120-MONOMER"/>
<dbReference type="BioCyc" id="MetaCyc:MONOMER-15503"/>
<dbReference type="BRENDA" id="4.3.3.6">
    <property type="organism ID" value="658"/>
</dbReference>
<dbReference type="SABIO-RK" id="P37528"/>
<dbReference type="UniPathway" id="UPA00245"/>
<dbReference type="EvolutionaryTrace" id="P37528"/>
<dbReference type="Proteomes" id="UP000001570">
    <property type="component" value="Chromosome"/>
</dbReference>
<dbReference type="GO" id="GO:0005829">
    <property type="term" value="C:cytosol"/>
    <property type="evidence" value="ECO:0000318"/>
    <property type="project" value="GO_Central"/>
</dbReference>
<dbReference type="GO" id="GO:1903600">
    <property type="term" value="C:glutaminase complex"/>
    <property type="evidence" value="ECO:0000318"/>
    <property type="project" value="GO_Central"/>
</dbReference>
<dbReference type="GO" id="GO:0004359">
    <property type="term" value="F:glutaminase activity"/>
    <property type="evidence" value="ECO:0007669"/>
    <property type="project" value="UniProtKB-UniRule"/>
</dbReference>
<dbReference type="GO" id="GO:0042802">
    <property type="term" value="F:identical protein binding"/>
    <property type="evidence" value="ECO:0000353"/>
    <property type="project" value="IntAct"/>
</dbReference>
<dbReference type="GO" id="GO:0036381">
    <property type="term" value="F:pyridoxal 5'-phosphate synthase (glutamine hydrolysing) activity"/>
    <property type="evidence" value="ECO:0007669"/>
    <property type="project" value="UniProtKB-UniRule"/>
</dbReference>
<dbReference type="GO" id="GO:0006543">
    <property type="term" value="P:glutamine catabolic process"/>
    <property type="evidence" value="ECO:0007669"/>
    <property type="project" value="UniProtKB-UniRule"/>
</dbReference>
<dbReference type="GO" id="GO:0042823">
    <property type="term" value="P:pyridoxal phosphate biosynthetic process"/>
    <property type="evidence" value="ECO:0000318"/>
    <property type="project" value="GO_Central"/>
</dbReference>
<dbReference type="GO" id="GO:0008614">
    <property type="term" value="P:pyridoxine metabolic process"/>
    <property type="evidence" value="ECO:0000318"/>
    <property type="project" value="GO_Central"/>
</dbReference>
<dbReference type="CDD" id="cd01749">
    <property type="entry name" value="GATase1_PB"/>
    <property type="match status" value="1"/>
</dbReference>
<dbReference type="FunFam" id="3.40.50.880:FF:000010">
    <property type="entry name" value="uncharacterized protein LOC100176842 isoform X2"/>
    <property type="match status" value="1"/>
</dbReference>
<dbReference type="Gene3D" id="3.40.50.880">
    <property type="match status" value="1"/>
</dbReference>
<dbReference type="HAMAP" id="MF_01615">
    <property type="entry name" value="PdxT"/>
    <property type="match status" value="1"/>
</dbReference>
<dbReference type="InterPro" id="IPR029062">
    <property type="entry name" value="Class_I_gatase-like"/>
</dbReference>
<dbReference type="InterPro" id="IPR002161">
    <property type="entry name" value="PdxT/SNO"/>
</dbReference>
<dbReference type="InterPro" id="IPR021196">
    <property type="entry name" value="PdxT/SNO_CS"/>
</dbReference>
<dbReference type="NCBIfam" id="TIGR03800">
    <property type="entry name" value="PLP_synth_Pdx2"/>
    <property type="match status" value="1"/>
</dbReference>
<dbReference type="PANTHER" id="PTHR31559">
    <property type="entry name" value="PYRIDOXAL 5'-PHOSPHATE SYNTHASE SUBUNIT SNO"/>
    <property type="match status" value="1"/>
</dbReference>
<dbReference type="PANTHER" id="PTHR31559:SF0">
    <property type="entry name" value="PYRIDOXAL 5'-PHOSPHATE SYNTHASE SUBUNIT SNO1-RELATED"/>
    <property type="match status" value="1"/>
</dbReference>
<dbReference type="Pfam" id="PF01174">
    <property type="entry name" value="SNO"/>
    <property type="match status" value="1"/>
</dbReference>
<dbReference type="PIRSF" id="PIRSF005639">
    <property type="entry name" value="Glut_amidoT_SNO"/>
    <property type="match status" value="1"/>
</dbReference>
<dbReference type="SUPFAM" id="SSF52317">
    <property type="entry name" value="Class I glutamine amidotransferase-like"/>
    <property type="match status" value="1"/>
</dbReference>
<dbReference type="PROSITE" id="PS01236">
    <property type="entry name" value="PDXT_SNO_1"/>
    <property type="match status" value="1"/>
</dbReference>
<dbReference type="PROSITE" id="PS51130">
    <property type="entry name" value="PDXT_SNO_2"/>
    <property type="match status" value="1"/>
</dbReference>
<reference key="1">
    <citation type="journal article" date="1994" name="DNA Res.">
        <title>Systematic sequencing of the 180 kilobase region of the Bacillus subtilis chromosome containing the replication origin.</title>
        <authorList>
            <person name="Ogasawara N."/>
            <person name="Nakai S."/>
            <person name="Yoshikawa H."/>
        </authorList>
    </citation>
    <scope>NUCLEOTIDE SEQUENCE [GENOMIC DNA]</scope>
    <source>
        <strain>168</strain>
    </source>
</reference>
<reference key="2">
    <citation type="journal article" date="1997" name="Nature">
        <title>The complete genome sequence of the Gram-positive bacterium Bacillus subtilis.</title>
        <authorList>
            <person name="Kunst F."/>
            <person name="Ogasawara N."/>
            <person name="Moszer I."/>
            <person name="Albertini A.M."/>
            <person name="Alloni G."/>
            <person name="Azevedo V."/>
            <person name="Bertero M.G."/>
            <person name="Bessieres P."/>
            <person name="Bolotin A."/>
            <person name="Borchert S."/>
            <person name="Borriss R."/>
            <person name="Boursier L."/>
            <person name="Brans A."/>
            <person name="Braun M."/>
            <person name="Brignell S.C."/>
            <person name="Bron S."/>
            <person name="Brouillet S."/>
            <person name="Bruschi C.V."/>
            <person name="Caldwell B."/>
            <person name="Capuano V."/>
            <person name="Carter N.M."/>
            <person name="Choi S.-K."/>
            <person name="Codani J.-J."/>
            <person name="Connerton I.F."/>
            <person name="Cummings N.J."/>
            <person name="Daniel R.A."/>
            <person name="Denizot F."/>
            <person name="Devine K.M."/>
            <person name="Duesterhoeft A."/>
            <person name="Ehrlich S.D."/>
            <person name="Emmerson P.T."/>
            <person name="Entian K.-D."/>
            <person name="Errington J."/>
            <person name="Fabret C."/>
            <person name="Ferrari E."/>
            <person name="Foulger D."/>
            <person name="Fritz C."/>
            <person name="Fujita M."/>
            <person name="Fujita Y."/>
            <person name="Fuma S."/>
            <person name="Galizzi A."/>
            <person name="Galleron N."/>
            <person name="Ghim S.-Y."/>
            <person name="Glaser P."/>
            <person name="Goffeau A."/>
            <person name="Golightly E.J."/>
            <person name="Grandi G."/>
            <person name="Guiseppi G."/>
            <person name="Guy B.J."/>
            <person name="Haga K."/>
            <person name="Haiech J."/>
            <person name="Harwood C.R."/>
            <person name="Henaut A."/>
            <person name="Hilbert H."/>
            <person name="Holsappel S."/>
            <person name="Hosono S."/>
            <person name="Hullo M.-F."/>
            <person name="Itaya M."/>
            <person name="Jones L.-M."/>
            <person name="Joris B."/>
            <person name="Karamata D."/>
            <person name="Kasahara Y."/>
            <person name="Klaerr-Blanchard M."/>
            <person name="Klein C."/>
            <person name="Kobayashi Y."/>
            <person name="Koetter P."/>
            <person name="Koningstein G."/>
            <person name="Krogh S."/>
            <person name="Kumano M."/>
            <person name="Kurita K."/>
            <person name="Lapidus A."/>
            <person name="Lardinois S."/>
            <person name="Lauber J."/>
            <person name="Lazarevic V."/>
            <person name="Lee S.-M."/>
            <person name="Levine A."/>
            <person name="Liu H."/>
            <person name="Masuda S."/>
            <person name="Mauel C."/>
            <person name="Medigue C."/>
            <person name="Medina N."/>
            <person name="Mellado R.P."/>
            <person name="Mizuno M."/>
            <person name="Moestl D."/>
            <person name="Nakai S."/>
            <person name="Noback M."/>
            <person name="Noone D."/>
            <person name="O'Reilly M."/>
            <person name="Ogawa K."/>
            <person name="Ogiwara A."/>
            <person name="Oudega B."/>
            <person name="Park S.-H."/>
            <person name="Parro V."/>
            <person name="Pohl T.M."/>
            <person name="Portetelle D."/>
            <person name="Porwollik S."/>
            <person name="Prescott A.M."/>
            <person name="Presecan E."/>
            <person name="Pujic P."/>
            <person name="Purnelle B."/>
            <person name="Rapoport G."/>
            <person name="Rey M."/>
            <person name="Reynolds S."/>
            <person name="Rieger M."/>
            <person name="Rivolta C."/>
            <person name="Rocha E."/>
            <person name="Roche B."/>
            <person name="Rose M."/>
            <person name="Sadaie Y."/>
            <person name="Sato T."/>
            <person name="Scanlan E."/>
            <person name="Schleich S."/>
            <person name="Schroeter R."/>
            <person name="Scoffone F."/>
            <person name="Sekiguchi J."/>
            <person name="Sekowska A."/>
            <person name="Seror S.J."/>
            <person name="Serror P."/>
            <person name="Shin B.-S."/>
            <person name="Soldo B."/>
            <person name="Sorokin A."/>
            <person name="Tacconi E."/>
            <person name="Takagi T."/>
            <person name="Takahashi H."/>
            <person name="Takemaru K."/>
            <person name="Takeuchi M."/>
            <person name="Tamakoshi A."/>
            <person name="Tanaka T."/>
            <person name="Terpstra P."/>
            <person name="Tognoni A."/>
            <person name="Tosato V."/>
            <person name="Uchiyama S."/>
            <person name="Vandenbol M."/>
            <person name="Vannier F."/>
            <person name="Vassarotti A."/>
            <person name="Viari A."/>
            <person name="Wambutt R."/>
            <person name="Wedler E."/>
            <person name="Wedler H."/>
            <person name="Weitzenegger T."/>
            <person name="Winters P."/>
            <person name="Wipat A."/>
            <person name="Yamamoto H."/>
            <person name="Yamane K."/>
            <person name="Yasumoto K."/>
            <person name="Yata K."/>
            <person name="Yoshida K."/>
            <person name="Yoshikawa H.-F."/>
            <person name="Zumstein E."/>
            <person name="Yoshikawa H."/>
            <person name="Danchin A."/>
        </authorList>
    </citation>
    <scope>NUCLEOTIDE SEQUENCE [LARGE SCALE GENOMIC DNA]</scope>
    <source>
        <strain>168</strain>
    </source>
</reference>
<reference key="3">
    <citation type="journal article" date="2005" name="J. Biol. Chem.">
        <title>On the two components of pyridoxal 5'-phosphate synthase from Bacillus subtilis.</title>
        <authorList>
            <person name="Raschle T."/>
            <person name="Amrhein N."/>
            <person name="Fitzpatrick T.B."/>
        </authorList>
    </citation>
    <scope>PROTEIN SEQUENCE OF 74-87</scope>
    <scope>FUNCTION</scope>
    <scope>CATALYTIC ACTIVITY</scope>
    <scope>BIOPHYSICOCHEMICAL PROPERTIES</scope>
    <scope>IDENTIFICATION OF REACTION PRODUCT</scope>
    <scope>IDENTIFICATION OF ACTIVE SITE CYS</scope>
    <source>
        <strain>168</strain>
    </source>
</reference>
<reference key="4">
    <citation type="journal article" date="2004" name="J. Bacteriol.">
        <title>Physical and enzymological interaction of Bacillus subtilis proteins required for de novo pyridoxal 5'-phosphate biosynthesis.</title>
        <authorList>
            <person name="Belitsky B.R."/>
        </authorList>
    </citation>
    <scope>CHARACTERIZATION</scope>
    <source>
        <strain>168 / SMY</strain>
    </source>
</reference>
<reference key="5">
    <citation type="journal article" date="2007" name="Biochemistry">
        <title>Thermodynamic characterization of the protein-protein interaction in the heteromeric Bacillus subtilis pyridoxalphosphate synthase.</title>
        <authorList>
            <person name="Neuwirth M."/>
            <person name="Flicker K."/>
            <person name="Strohmeier M."/>
            <person name="Tews I."/>
            <person name="Macheroux P."/>
        </authorList>
    </citation>
    <scope>COMPLEX FORMATION OF PDXS AND PDXT</scope>
</reference>
<reference key="6">
    <citation type="journal article" date="2009" name="Biochemistry">
        <title>Dissection of contributions from invariant amino acids to complex formation and catalysis in the heteromeric pyridoxal 5-phosphate synthase complex from Bacillus subtilis.</title>
        <authorList>
            <person name="Wallner S."/>
            <person name="Neuwirth M."/>
            <person name="Flicker K."/>
            <person name="Tews I."/>
            <person name="Macheroux P."/>
        </authorList>
    </citation>
    <scope>MUTAGENESIS OF GLN-10; GLU-15; GLU-48; ARG-106 AND ARG-135</scope>
</reference>
<reference key="7">
    <citation type="journal article" date="2004" name="J. Biol. Chem.">
        <title>Three-dimensional structure of YaaE from Bacillus subtilis, a glutaminase implicated in pyridoxal-5'-phosphate biosynthesis.</title>
        <authorList>
            <person name="Bauer J.A."/>
            <person name="Bennett E.M."/>
            <person name="Begley T.P."/>
            <person name="Ealick S.E."/>
        </authorList>
    </citation>
    <scope>X-RAY CRYSTALLOGRAPHY (2.5 ANGSTROMS)</scope>
</reference>
<reference key="8">
    <citation type="journal article" date="2006" name="Proc. Natl. Acad. Sci. U.S.A.">
        <title>Structure of a bacterial pyridoxal 5'-phosphate synthase complex.</title>
        <authorList>
            <person name="Strohmeier M."/>
            <person name="Raschle T."/>
            <person name="Mazurkiewicz J."/>
            <person name="Rippe K."/>
            <person name="Sinning I."/>
            <person name="Fitzpatrick T.B."/>
            <person name="Tews I."/>
        </authorList>
    </citation>
    <scope>X-RAY CRYSTALLOGRAPHY (1.73 ANGSTROMS) OF APOENZYME AND MUTANT ASN-170 IN COMPLEX WITH SUBUNIT PDXS AND GLUTAMINE</scope>
    <scope>SUBUNIT</scope>
    <scope>MUTAGENESIS OF HIS-170</scope>
    <source>
        <strain>168 / CU1065</strain>
    </source>
</reference>
<gene>
    <name evidence="1" type="primary">pdxT</name>
    <name type="synonym">yaaE</name>
    <name type="ordered locus">BSU00120</name>
</gene>